<evidence type="ECO:0000250" key="1">
    <source>
        <dbReference type="UniProtKB" id="P0C350"/>
    </source>
</evidence>
<evidence type="ECO:0000269" key="2">
    <source>
    </source>
</evidence>
<evidence type="ECO:0000303" key="3">
    <source>
    </source>
</evidence>
<evidence type="ECO:0000305" key="4"/>
<evidence type="ECO:0000305" key="5">
    <source>
    </source>
</evidence>
<reference key="1">
    <citation type="journal article" date="2007" name="Mol. Pharmacol.">
        <title>Isolation and structure-activity of mu-conotoxin TIIIA, a potent inhibitor of tetrodotoxin-sensitive voltage-gated sodium channels.</title>
        <authorList>
            <person name="Lewis R.J."/>
            <person name="Schroeder C.I."/>
            <person name="Ekberg J."/>
            <person name="Nielsen K.J."/>
            <person name="Loughnan M."/>
            <person name="Thomas L."/>
            <person name="Adams D.A."/>
            <person name="Drinkwater R."/>
            <person name="Adams D.J."/>
            <person name="Alewood P.F."/>
        </authorList>
    </citation>
    <scope>PROTEIN SEQUENCE</scope>
    <scope>FUNCTION</scope>
    <scope>SYNTHESIS</scope>
    <scope>HYDROXYLATION AT PRO-8 AND PRO-18</scope>
    <scope>STRUCTURE BY NMR</scope>
    <scope>DISULFIDE BONDS</scope>
    <scope>MUTAGENESIS OF HIS-2; LYS-6; LYS-9; ARG-14; GLU-15; ARG-17; GLN-19 AND HIS-20</scope>
    <scope>SUBCELLULAR LOCATION</scope>
    <source>
        <tissue>Venom</tissue>
    </source>
</reference>
<name>CM3C_CONST</name>
<sequence>RHGCCKGPKGCSSRECRPQHCC</sequence>
<dbReference type="GO" id="GO:0005576">
    <property type="term" value="C:extracellular region"/>
    <property type="evidence" value="ECO:0007669"/>
    <property type="project" value="UniProtKB-SubCell"/>
</dbReference>
<dbReference type="GO" id="GO:0019871">
    <property type="term" value="F:sodium channel inhibitor activity"/>
    <property type="evidence" value="ECO:0007669"/>
    <property type="project" value="InterPro"/>
</dbReference>
<dbReference type="GO" id="GO:0090729">
    <property type="term" value="F:toxin activity"/>
    <property type="evidence" value="ECO:0007669"/>
    <property type="project" value="UniProtKB-KW"/>
</dbReference>
<dbReference type="InterPro" id="IPR008036">
    <property type="entry name" value="Conotoxin_mu-typ"/>
</dbReference>
<dbReference type="Pfam" id="PF05374">
    <property type="entry name" value="Mu-conotoxin"/>
    <property type="match status" value="1"/>
</dbReference>
<keyword id="KW-0027">Amidation</keyword>
<keyword id="KW-0903">Direct protein sequencing</keyword>
<keyword id="KW-1015">Disulfide bond</keyword>
<keyword id="KW-0379">Hydroxylation</keyword>
<keyword id="KW-0872">Ion channel impairing toxin</keyword>
<keyword id="KW-0528">Neurotoxin</keyword>
<keyword id="KW-0964">Secreted</keyword>
<keyword id="KW-0800">Toxin</keyword>
<keyword id="KW-0738">Voltage-gated sodium channel impairing toxin</keyword>
<comment type="function">
    <text evidence="2">Mu-conotoxins block voltage-gated sodium channels. This synthetic peptide reversibly inhibits the brain sodium channel rNav1.2/SCN2A (IC(50) is 40 nM) and the skeletal muscle sodium channel rNav1.4/SCN4A (IC(50) is 9 nM).</text>
</comment>
<comment type="subcellular location">
    <subcellularLocation>
        <location evidence="2">Secreted</location>
    </subcellularLocation>
</comment>
<comment type="tissue specificity">
    <text evidence="5">Expressed by the venom duct.</text>
</comment>
<comment type="domain">
    <text evidence="4">The cysteine framework is III (CC-C-C-CC). Classified in the M-4 branch, since 4 residues stand between the fourth and the fifth cysteine residues.</text>
</comment>
<comment type="miscellaneous">
    <text evidence="5">No cis-trans isomerization is found.</text>
</comment>
<comment type="similarity">
    <text evidence="4">Belongs to the conotoxin M superfamily.</text>
</comment>
<organism>
    <name type="scientific">Conus striatus</name>
    <name type="common">Striated cone</name>
    <dbReference type="NCBI Taxonomy" id="6493"/>
    <lineage>
        <taxon>Eukaryota</taxon>
        <taxon>Metazoa</taxon>
        <taxon>Spiralia</taxon>
        <taxon>Lophotrochozoa</taxon>
        <taxon>Mollusca</taxon>
        <taxon>Gastropoda</taxon>
        <taxon>Caenogastropoda</taxon>
        <taxon>Neogastropoda</taxon>
        <taxon>Conoidea</taxon>
        <taxon>Conidae</taxon>
        <taxon>Conus</taxon>
        <taxon>Pionoconus</taxon>
    </lineage>
</organism>
<proteinExistence type="evidence at protein level"/>
<accession>P0C349</accession>
<feature type="peptide" id="PRO_0000288944" description="Mu-conotoxin SIIIC" evidence="2">
    <location>
        <begin position="1"/>
        <end position="22"/>
    </location>
</feature>
<feature type="site" description="Important for activity">
    <location>
        <position position="14"/>
    </location>
</feature>
<feature type="modified residue" description="4-hydroxyproline" evidence="2">
    <location>
        <position position="8"/>
    </location>
</feature>
<feature type="modified residue" description="4-hydroxyproline" evidence="2">
    <location>
        <position position="18"/>
    </location>
</feature>
<feature type="modified residue" description="Cysteine amide" evidence="1">
    <location>
        <position position="22"/>
    </location>
</feature>
<feature type="disulfide bond" evidence="2">
    <location>
        <begin position="4"/>
        <end position="16"/>
    </location>
</feature>
<feature type="disulfide bond" evidence="2">
    <location>
        <begin position="5"/>
        <end position="21"/>
    </location>
</feature>
<feature type="disulfide bond" evidence="2">
    <location>
        <begin position="11"/>
        <end position="22"/>
    </location>
</feature>
<feature type="mutagenesis site" description="Slight increase in toxicity at rat muscle." evidence="2">
    <original>H</original>
    <variation>A</variation>
    <location>
        <position position="2"/>
    </location>
</feature>
<feature type="mutagenesis site" description="Little decrease in toxicity at both rat muscle and brain level." evidence="2">
    <original>K</original>
    <variation>A</variation>
    <variation>Q</variation>
    <location>
        <position position="6"/>
    </location>
</feature>
<feature type="mutagenesis site" description="Little decrease in toxicity at both rat muscle and brain level." evidence="2">
    <original>K</original>
    <variation>A</variation>
    <variation>Q</variation>
    <location>
        <position position="9"/>
    </location>
</feature>
<feature type="mutagenesis site" description="Important decrease of toxicity at both rat muscle and brain level." evidence="2">
    <original>R</original>
    <variation>A</variation>
    <variation>Y</variation>
    <variation>Q</variation>
    <location>
        <position position="14"/>
    </location>
</feature>
<feature type="mutagenesis site" description="10-fold increase in affinity for both rat brain and muscle Navs." evidence="2">
    <original>E</original>
    <variation>A</variation>
    <location>
        <position position="15"/>
    </location>
</feature>
<feature type="mutagenesis site" description="Little decrease in toxicity at both rat muscle and brain level." evidence="2">
    <original>R</original>
    <variation>A</variation>
    <variation>Q</variation>
    <location>
        <position position="17"/>
    </location>
</feature>
<feature type="mutagenesis site" description="Slight increase in toxicity at rat muscle." evidence="2">
    <original>Q</original>
    <variation>A</variation>
    <location>
        <position position="19"/>
    </location>
</feature>
<feature type="mutagenesis site" description="Little decrease in toxicity at both rat muscle and brain level." evidence="2">
    <original>H</original>
    <variation>A</variation>
    <location>
        <position position="20"/>
    </location>
</feature>
<protein>
    <recommendedName>
        <fullName evidence="4">Mu-conotoxin SIIIC</fullName>
    </recommendedName>
    <alternativeName>
        <fullName evidence="3">Mu-conotoxin TIIIA-like</fullName>
    </alternativeName>
</protein>